<dbReference type="EMBL" id="MH750034">
    <property type="protein sequence ID" value="AYK27407.1"/>
    <property type="molecule type" value="mRNA"/>
</dbReference>
<dbReference type="ConoServer" id="8493">
    <property type="toxin name" value="VilXIVB precursor"/>
</dbReference>
<dbReference type="GO" id="GO:0005576">
    <property type="term" value="C:extracellular region"/>
    <property type="evidence" value="ECO:0007669"/>
    <property type="project" value="UniProtKB-SubCell"/>
</dbReference>
<dbReference type="GO" id="GO:0015459">
    <property type="term" value="F:potassium channel regulator activity"/>
    <property type="evidence" value="ECO:0007669"/>
    <property type="project" value="UniProtKB-KW"/>
</dbReference>
<dbReference type="GO" id="GO:0090729">
    <property type="term" value="F:toxin activity"/>
    <property type="evidence" value="ECO:0007669"/>
    <property type="project" value="UniProtKB-KW"/>
</dbReference>
<evidence type="ECO:0000250" key="1">
    <source>
        <dbReference type="UniProtKB" id="P84704"/>
    </source>
</evidence>
<evidence type="ECO:0000255" key="2"/>
<evidence type="ECO:0000256" key="3">
    <source>
        <dbReference type="SAM" id="MobiDB-lite"/>
    </source>
</evidence>
<evidence type="ECO:0000303" key="4">
    <source>
    </source>
</evidence>
<evidence type="ECO:0000305" key="5"/>
<evidence type="ECO:0000305" key="6">
    <source>
    </source>
</evidence>
<proteinExistence type="inferred from homology"/>
<name>CRE3_CONVL</name>
<reference key="1">
    <citation type="journal article" date="2018" name="Peptides">
        <title>Definition of the R-superfamily of conotoxins: structural convergence of helix-loop-helix peptidic scaffolds.</title>
        <authorList>
            <person name="Moeller C."/>
            <person name="Dovell S."/>
            <person name="Melaun C."/>
            <person name="Mari F."/>
        </authorList>
    </citation>
    <scope>NUCLEOTIDE SEQUENCE [MRNA]</scope>
    <source>
        <tissue>Venom duct</tissue>
    </source>
</reference>
<comment type="subcellular location">
    <subcellularLocation>
        <location evidence="6">Secreted</location>
    </subcellularLocation>
</comment>
<comment type="tissue specificity">
    <text evidence="6">Expressed by the venom duct.</text>
</comment>
<comment type="domain">
    <text evidence="5">The cysteine framework is XIV (C-C-C-C).</text>
</comment>
<comment type="similarity">
    <text evidence="5">Belongs to the conotoxin R superfamily.</text>
</comment>
<sequence length="117" mass="13460">MGFRVLVLVVMATTSALPFTFSEEPGRSPFRPALRSEEAQALRHGLTLLLARRADGQPPDMRQPEMRRPEMRRPEVRQPEFAELSVGQRRWDVDQCMYYCLTGVVGYSYTECETMCT</sequence>
<feature type="signal peptide" evidence="2">
    <location>
        <begin position="1"/>
        <end position="22"/>
    </location>
</feature>
<feature type="propeptide" id="PRO_0000446994" evidence="6">
    <location>
        <begin position="23"/>
        <end position="90"/>
    </location>
</feature>
<feature type="peptide" id="PRO_0000446995" description="Conotoxin vil14.3" evidence="6">
    <location>
        <begin position="91"/>
        <end position="117"/>
    </location>
</feature>
<feature type="region of interest" description="Disordered" evidence="3">
    <location>
        <begin position="53"/>
        <end position="79"/>
    </location>
</feature>
<feature type="compositionally biased region" description="Basic and acidic residues" evidence="3">
    <location>
        <begin position="62"/>
        <end position="79"/>
    </location>
</feature>
<feature type="disulfide bond" evidence="1">
    <location>
        <begin position="96"/>
        <end position="116"/>
    </location>
</feature>
<feature type="disulfide bond" evidence="1">
    <location>
        <begin position="100"/>
        <end position="112"/>
    </location>
</feature>
<protein>
    <recommendedName>
        <fullName evidence="4">Conotoxin vil14.3</fullName>
    </recommendedName>
</protein>
<accession>A0A3G1VU81</accession>
<keyword id="KW-0165">Cleavage on pair of basic residues</keyword>
<keyword id="KW-1015">Disulfide bond</keyword>
<keyword id="KW-0872">Ion channel impairing toxin</keyword>
<keyword id="KW-0528">Neurotoxin</keyword>
<keyword id="KW-0632">Potassium channel impairing toxin</keyword>
<keyword id="KW-0964">Secreted</keyword>
<keyword id="KW-0732">Signal</keyword>
<keyword id="KW-0800">Toxin</keyword>
<organism>
    <name type="scientific">Conus villepinii</name>
    <name type="common">Villepin's cone</name>
    <dbReference type="NCBI Taxonomy" id="257347"/>
    <lineage>
        <taxon>Eukaryota</taxon>
        <taxon>Metazoa</taxon>
        <taxon>Spiralia</taxon>
        <taxon>Lophotrochozoa</taxon>
        <taxon>Mollusca</taxon>
        <taxon>Gastropoda</taxon>
        <taxon>Caenogastropoda</taxon>
        <taxon>Neogastropoda</taxon>
        <taxon>Conoidea</taxon>
        <taxon>Conidae</taxon>
        <taxon>Conus</taxon>
        <taxon>Dauciconus</taxon>
    </lineage>
</organism>